<gene>
    <name type="ordered locus">MMP1489</name>
</gene>
<organism>
    <name type="scientific">Methanococcus maripaludis (strain DSM 14266 / JCM 13030 / NBRC 101832 / S2 / LL)</name>
    <dbReference type="NCBI Taxonomy" id="267377"/>
    <lineage>
        <taxon>Archaea</taxon>
        <taxon>Methanobacteriati</taxon>
        <taxon>Methanobacteriota</taxon>
        <taxon>Methanomada group</taxon>
        <taxon>Methanococci</taxon>
        <taxon>Methanococcales</taxon>
        <taxon>Methanococcaceae</taxon>
        <taxon>Methanococcus</taxon>
    </lineage>
</organism>
<name>NPPNK_METMP</name>
<accession>Q6LX63</accession>
<evidence type="ECO:0000250" key="1">
    <source>
        <dbReference type="UniProtKB" id="Q57573"/>
    </source>
</evidence>
<evidence type="ECO:0000250" key="2">
    <source>
        <dbReference type="UniProtKB" id="Q58327"/>
    </source>
</evidence>
<evidence type="ECO:0000255" key="3">
    <source>
        <dbReference type="HAMAP-Rule" id="MF_00361"/>
    </source>
</evidence>
<evidence type="ECO:0000305" key="4"/>
<reference key="1">
    <citation type="journal article" date="2004" name="J. Bacteriol.">
        <title>Complete genome sequence of the genetically tractable hydrogenotrophic methanogen Methanococcus maripaludis.</title>
        <authorList>
            <person name="Hendrickson E.L."/>
            <person name="Kaul R."/>
            <person name="Zhou Y."/>
            <person name="Bovee D."/>
            <person name="Chapman P."/>
            <person name="Chung J."/>
            <person name="Conway de Macario E."/>
            <person name="Dodsworth J.A."/>
            <person name="Gillett W."/>
            <person name="Graham D.E."/>
            <person name="Hackett M."/>
            <person name="Haydock A.K."/>
            <person name="Kang A."/>
            <person name="Land M.L."/>
            <person name="Levy R."/>
            <person name="Lie T.J."/>
            <person name="Major T.A."/>
            <person name="Moore B.C."/>
            <person name="Porat I."/>
            <person name="Palmeiri A."/>
            <person name="Rouse G."/>
            <person name="Saenphimmachak C."/>
            <person name="Soell D."/>
            <person name="Van Dien S."/>
            <person name="Wang T."/>
            <person name="Whitman W.B."/>
            <person name="Xia Q."/>
            <person name="Zhang Y."/>
            <person name="Larimer F.W."/>
            <person name="Olson M.V."/>
            <person name="Leigh J.A."/>
        </authorList>
    </citation>
    <scope>NUCLEOTIDE SEQUENCE [LARGE SCALE GENOMIC DNA]</scope>
    <source>
        <strain>DSM 14266 / JCM 13030 / NBRC 101832 / S2 / LL</strain>
    </source>
</reference>
<comment type="function">
    <text evidence="2">Involved in the regulation of the intracellular balance between NAD(H) and NADP(H), and is a key enzyme in the biosynthesis of NADP. Catalyzes the phosphorylation and dephosphorylation of NAD and NADP, respectively. Although it shows conflicting dual activities and is able to supply NADP, it seems that its physiological role is to prevent excess accumulation of NADP.</text>
</comment>
<comment type="catalytic activity">
    <reaction evidence="3">
        <text>NAD(+) + ATP = ADP + NADP(+) + H(+)</text>
        <dbReference type="Rhea" id="RHEA:18629"/>
        <dbReference type="ChEBI" id="CHEBI:15378"/>
        <dbReference type="ChEBI" id="CHEBI:30616"/>
        <dbReference type="ChEBI" id="CHEBI:57540"/>
        <dbReference type="ChEBI" id="CHEBI:58349"/>
        <dbReference type="ChEBI" id="CHEBI:456216"/>
        <dbReference type="EC" id="2.7.1.23"/>
    </reaction>
    <physiologicalReaction direction="left-to-right" evidence="2">
        <dbReference type="Rhea" id="RHEA:18630"/>
    </physiologicalReaction>
</comment>
<comment type="catalytic activity">
    <reaction evidence="2">
        <text>NADP(+) + H2O = phosphate + NAD(+)</text>
        <dbReference type="Rhea" id="RHEA:28050"/>
        <dbReference type="ChEBI" id="CHEBI:15377"/>
        <dbReference type="ChEBI" id="CHEBI:43474"/>
        <dbReference type="ChEBI" id="CHEBI:57540"/>
        <dbReference type="ChEBI" id="CHEBI:58349"/>
    </reaction>
    <physiologicalReaction direction="left-to-right" evidence="2">
        <dbReference type="Rhea" id="RHEA:28051"/>
    </physiologicalReaction>
</comment>
<comment type="cofactor">
    <cofactor evidence="2">
        <name>Mg(2+)</name>
        <dbReference type="ChEBI" id="CHEBI:18420"/>
    </cofactor>
</comment>
<comment type="subunit">
    <text evidence="2">Homotetramer.</text>
</comment>
<comment type="subcellular location">
    <subcellularLocation>
        <location evidence="3">Cytoplasm</location>
    </subcellularLocation>
</comment>
<comment type="similarity">
    <text evidence="4">In the N-terminal section; belongs to the inositol monophosphatase superfamily.</text>
</comment>
<comment type="similarity">
    <text evidence="4">In the C-terminal section; belongs to the NAD kinase family.</text>
</comment>
<sequence>MDMLEMALNIAKDIEKSVKPLIGWEKSNEVVKIGADGTPTKRIDLIAENVAINSIEKVCSAILISEEIGFKRIGKNKPEYVIVLDPVDGTYNSLKDIPFYSAAVAIGRIDKFADNLEELINNLKMKDLEVGVVRNIATGDTYYAEKGKGAHFLRKGEKKSISISNSSNLKDSSIGLFAHDISIDTLKFIKDRRFRRIRLFGSIALEMCYVAKGALDAFINVNETTRLCDIAAGYVIIKEAGGIVTDKNGQEVNLDLDVNSKVSVICSNEMLHKKLVGIFGNRWRIKPTNFGIISRIDNEESIEVADNVIKYLDSKGIKYELDSSTYNALKNRLTKKCDIISNIEEISHMISIGGDGTVLRASKMIEGNEIPMVCINMGTVGFLTEFNKDEIFSAIDSIICGSYKVEKRTKLMGFAKLSDGKQHILNDSLNEVVITTKNPAKMMHFEVYIDGSLVEDVRADGIIVSTPNGSTAYSLSSGGPIIEPTVEGFVIVPICPFKLSSRPLVVNANSEIKIKLLKKSTYVVIDGNTEFEAKKGDEIILRKSESNAYFVKGDNFYNKLKKLSLM</sequence>
<proteinExistence type="inferred from homology"/>
<protein>
    <recommendedName>
        <fullName evidence="2">Bifunctional NADP phosphatase/NAD kinase</fullName>
    </recommendedName>
    <domain>
        <recommendedName>
            <fullName evidence="3">NAD kinase</fullName>
            <ecNumber evidence="3">2.7.1.23</ecNumber>
        </recommendedName>
        <alternativeName>
            <fullName evidence="3">ATP-dependent NAD kinase</fullName>
        </alternativeName>
        <alternativeName>
            <fullName>Poly(P)-dependent NAD kinase</fullName>
            <shortName>PPNK</shortName>
        </alternativeName>
    </domain>
    <domain>
        <recommendedName>
            <fullName evidence="2">NADP phosphatase</fullName>
            <shortName evidence="2">NADPase</shortName>
            <shortName evidence="2">pNPPase</shortName>
            <ecNumber evidence="2">3.1.3.-</ecNumber>
        </recommendedName>
    </domain>
</protein>
<dbReference type="EC" id="2.7.1.23" evidence="3"/>
<dbReference type="EC" id="3.1.3.-" evidence="2"/>
<dbReference type="EMBL" id="BX950229">
    <property type="protein sequence ID" value="CAF31045.1"/>
    <property type="molecule type" value="Genomic_DNA"/>
</dbReference>
<dbReference type="RefSeq" id="WP_011171433.1">
    <property type="nucleotide sequence ID" value="NC_005791.1"/>
</dbReference>
<dbReference type="SMR" id="Q6LX63"/>
<dbReference type="STRING" id="267377.MMP1489"/>
<dbReference type="EnsemblBacteria" id="CAF31045">
    <property type="protein sequence ID" value="CAF31045"/>
    <property type="gene ID" value="MMP1489"/>
</dbReference>
<dbReference type="GeneID" id="2761729"/>
<dbReference type="KEGG" id="mmp:MMP1489"/>
<dbReference type="PATRIC" id="fig|267377.15.peg.1526"/>
<dbReference type="eggNOG" id="arCOG01348">
    <property type="taxonomic scope" value="Archaea"/>
</dbReference>
<dbReference type="HOGENOM" id="CLU_445249_0_0_2"/>
<dbReference type="OrthoDB" id="77798at2157"/>
<dbReference type="Proteomes" id="UP000000590">
    <property type="component" value="Chromosome"/>
</dbReference>
<dbReference type="GO" id="GO:0005737">
    <property type="term" value="C:cytoplasm"/>
    <property type="evidence" value="ECO:0007669"/>
    <property type="project" value="UniProtKB-SubCell"/>
</dbReference>
<dbReference type="GO" id="GO:0005524">
    <property type="term" value="F:ATP binding"/>
    <property type="evidence" value="ECO:0000250"/>
    <property type="project" value="UniProtKB"/>
</dbReference>
<dbReference type="GO" id="GO:0046872">
    <property type="term" value="F:metal ion binding"/>
    <property type="evidence" value="ECO:0007669"/>
    <property type="project" value="UniProtKB-UniRule"/>
</dbReference>
<dbReference type="GO" id="GO:0051287">
    <property type="term" value="F:NAD binding"/>
    <property type="evidence" value="ECO:0000250"/>
    <property type="project" value="UniProtKB"/>
</dbReference>
<dbReference type="GO" id="GO:0003951">
    <property type="term" value="F:NAD+ kinase activity"/>
    <property type="evidence" value="ECO:0000250"/>
    <property type="project" value="UniProtKB"/>
</dbReference>
<dbReference type="GO" id="GO:0019178">
    <property type="term" value="F:NADP phosphatase activity"/>
    <property type="evidence" value="ECO:0000250"/>
    <property type="project" value="UniProtKB"/>
</dbReference>
<dbReference type="GO" id="GO:0006553">
    <property type="term" value="P:lysine metabolic process"/>
    <property type="evidence" value="ECO:0007669"/>
    <property type="project" value="InterPro"/>
</dbReference>
<dbReference type="GO" id="GO:0019674">
    <property type="term" value="P:NAD metabolic process"/>
    <property type="evidence" value="ECO:0007669"/>
    <property type="project" value="InterPro"/>
</dbReference>
<dbReference type="GO" id="GO:0006741">
    <property type="term" value="P:NADP biosynthetic process"/>
    <property type="evidence" value="ECO:0007669"/>
    <property type="project" value="UniProtKB-UniRule"/>
</dbReference>
<dbReference type="CDD" id="cd01515">
    <property type="entry name" value="Arch_FBPase_1"/>
    <property type="match status" value="1"/>
</dbReference>
<dbReference type="FunFam" id="3.30.540.10:FF:000027">
    <property type="entry name" value="Fructose-1,6-bisphosphatase/inositol-1-monophosphatase"/>
    <property type="match status" value="1"/>
</dbReference>
<dbReference type="FunFam" id="3.40.190.80:FF:000020">
    <property type="entry name" value="Fructose-1,6-bisphosphatase/inositol-1-monophosphatase"/>
    <property type="match status" value="1"/>
</dbReference>
<dbReference type="FunFam" id="3.40.50.10330:FF:000053">
    <property type="entry name" value="NAD kinase 1"/>
    <property type="match status" value="1"/>
</dbReference>
<dbReference type="FunFam" id="2.60.200.30:FF:000009">
    <property type="entry name" value="Poly(P)/ATP NAD kinase"/>
    <property type="match status" value="1"/>
</dbReference>
<dbReference type="Gene3D" id="3.40.190.80">
    <property type="match status" value="1"/>
</dbReference>
<dbReference type="Gene3D" id="3.30.540.10">
    <property type="entry name" value="Fructose-1,6-Bisphosphatase, subunit A, domain 1"/>
    <property type="match status" value="1"/>
</dbReference>
<dbReference type="Gene3D" id="3.40.50.10330">
    <property type="entry name" value="Probable inorganic polyphosphate/atp-NAD kinase, domain 1"/>
    <property type="match status" value="1"/>
</dbReference>
<dbReference type="Gene3D" id="2.60.200.30">
    <property type="entry name" value="Probable inorganic polyphosphate/atp-NAD kinase, domain 2"/>
    <property type="match status" value="1"/>
</dbReference>
<dbReference type="HAMAP" id="MF_00361">
    <property type="entry name" value="NAD_kinase"/>
    <property type="match status" value="1"/>
</dbReference>
<dbReference type="InterPro" id="IPR017438">
    <property type="entry name" value="ATP-NAD_kinase_N"/>
</dbReference>
<dbReference type="InterPro" id="IPR017437">
    <property type="entry name" value="ATP-NAD_kinase_PpnK-typ_C"/>
</dbReference>
<dbReference type="InterPro" id="IPR021175">
    <property type="entry name" value="Bifunctional_PpnK_predicted"/>
</dbReference>
<dbReference type="InterPro" id="IPR000760">
    <property type="entry name" value="Inositol_monophosphatase-like"/>
</dbReference>
<dbReference type="InterPro" id="IPR016064">
    <property type="entry name" value="NAD/diacylglycerol_kinase_sf"/>
</dbReference>
<dbReference type="InterPro" id="IPR002504">
    <property type="entry name" value="NADK"/>
</dbReference>
<dbReference type="NCBIfam" id="NF009321">
    <property type="entry name" value="PRK12676.1"/>
    <property type="match status" value="1"/>
</dbReference>
<dbReference type="NCBIfam" id="NF010678">
    <property type="entry name" value="PRK14076.1"/>
    <property type="match status" value="1"/>
</dbReference>
<dbReference type="PANTHER" id="PTHR20275:SF43">
    <property type="entry name" value="BIFUNCTIONAL NADP PHOSPHATASE_NAD KINASE"/>
    <property type="match status" value="1"/>
</dbReference>
<dbReference type="PANTHER" id="PTHR20275">
    <property type="entry name" value="NAD KINASE"/>
    <property type="match status" value="1"/>
</dbReference>
<dbReference type="Pfam" id="PF00459">
    <property type="entry name" value="Inositol_P"/>
    <property type="match status" value="1"/>
</dbReference>
<dbReference type="Pfam" id="PF01513">
    <property type="entry name" value="NAD_kinase"/>
    <property type="match status" value="1"/>
</dbReference>
<dbReference type="Pfam" id="PF20143">
    <property type="entry name" value="NAD_kinase_C"/>
    <property type="match status" value="1"/>
</dbReference>
<dbReference type="PIRSF" id="PIRSF036641">
    <property type="entry name" value="Bifunctional_PpnK_predicted"/>
    <property type="match status" value="1"/>
</dbReference>
<dbReference type="PRINTS" id="PR00377">
    <property type="entry name" value="IMPHPHTASES"/>
</dbReference>
<dbReference type="SUPFAM" id="SSF56655">
    <property type="entry name" value="Carbohydrate phosphatase"/>
    <property type="match status" value="1"/>
</dbReference>
<dbReference type="SUPFAM" id="SSF111331">
    <property type="entry name" value="NAD kinase/diacylglycerol kinase-like"/>
    <property type="match status" value="1"/>
</dbReference>
<feature type="chain" id="PRO_0000229718" description="Bifunctional NADP phosphatase/NAD kinase">
    <location>
        <begin position="1"/>
        <end position="566"/>
    </location>
</feature>
<feature type="region of interest" description="NADP phosphatase" evidence="2">
    <location>
        <begin position="1"/>
        <end position="283"/>
    </location>
</feature>
<feature type="region of interest" description="NAD kinase" evidence="2">
    <location>
        <begin position="275"/>
        <end position="566"/>
    </location>
</feature>
<feature type="active site" description="Proton acceptor" evidence="3">
    <location>
        <position position="355"/>
    </location>
</feature>
<feature type="binding site" evidence="1">
    <location>
        <position position="66"/>
    </location>
    <ligand>
        <name>Mg(2+)</name>
        <dbReference type="ChEBI" id="CHEBI:18420"/>
        <label>1</label>
    </ligand>
</feature>
<feature type="binding site" evidence="1">
    <location>
        <position position="85"/>
    </location>
    <ligand>
        <name>Mg(2+)</name>
        <dbReference type="ChEBI" id="CHEBI:18420"/>
        <label>1</label>
    </ligand>
</feature>
<feature type="binding site" evidence="1">
    <location>
        <position position="85"/>
    </location>
    <ligand>
        <name>Mg(2+)</name>
        <dbReference type="ChEBI" id="CHEBI:18420"/>
        <label>2</label>
    </ligand>
</feature>
<feature type="binding site" evidence="1">
    <location>
        <position position="87"/>
    </location>
    <ligand>
        <name>Mg(2+)</name>
        <dbReference type="ChEBI" id="CHEBI:18420"/>
        <label>1</label>
    </ligand>
</feature>
<feature type="binding site" evidence="1">
    <location>
        <position position="88"/>
    </location>
    <ligand>
        <name>Mg(2+)</name>
        <dbReference type="ChEBI" id="CHEBI:18420"/>
        <label>2</label>
    </ligand>
</feature>
<feature type="binding site" evidence="1">
    <location>
        <position position="229"/>
    </location>
    <ligand>
        <name>Mg(2+)</name>
        <dbReference type="ChEBI" id="CHEBI:18420"/>
        <label>2</label>
    </ligand>
</feature>
<feature type="binding site" evidence="3">
    <location>
        <begin position="355"/>
        <end position="356"/>
    </location>
    <ligand>
        <name>NAD(+)</name>
        <dbReference type="ChEBI" id="CHEBI:57540"/>
    </ligand>
</feature>
<feature type="binding site" evidence="3">
    <location>
        <position position="360"/>
    </location>
    <ligand>
        <name>NAD(+)</name>
        <dbReference type="ChEBI" id="CHEBI:57540"/>
    </ligand>
</feature>
<feature type="binding site" evidence="3">
    <location>
        <begin position="430"/>
        <end position="431"/>
    </location>
    <ligand>
        <name>NAD(+)</name>
        <dbReference type="ChEBI" id="CHEBI:57540"/>
    </ligand>
</feature>
<feature type="binding site" evidence="3">
    <location>
        <position position="441"/>
    </location>
    <ligand>
        <name>NAD(+)</name>
        <dbReference type="ChEBI" id="CHEBI:57540"/>
    </ligand>
</feature>
<feature type="binding site" evidence="3">
    <location>
        <position position="458"/>
    </location>
    <ligand>
        <name>NAD(+)</name>
        <dbReference type="ChEBI" id="CHEBI:57540"/>
    </ligand>
</feature>
<feature type="binding site" evidence="3">
    <location>
        <position position="460"/>
    </location>
    <ligand>
        <name>NAD(+)</name>
        <dbReference type="ChEBI" id="CHEBI:57540"/>
    </ligand>
</feature>
<feature type="binding site" evidence="3">
    <location>
        <begin position="471"/>
        <end position="476"/>
    </location>
    <ligand>
        <name>NAD(+)</name>
        <dbReference type="ChEBI" id="CHEBI:57540"/>
    </ligand>
</feature>
<feature type="binding site" evidence="3">
    <location>
        <position position="528"/>
    </location>
    <ligand>
        <name>NAD(+)</name>
        <dbReference type="ChEBI" id="CHEBI:57540"/>
    </ligand>
</feature>
<keyword id="KW-0067">ATP-binding</keyword>
<keyword id="KW-0963">Cytoplasm</keyword>
<keyword id="KW-0378">Hydrolase</keyword>
<keyword id="KW-0418">Kinase</keyword>
<keyword id="KW-0460">Magnesium</keyword>
<keyword id="KW-0479">Metal-binding</keyword>
<keyword id="KW-0511">Multifunctional enzyme</keyword>
<keyword id="KW-0520">NAD</keyword>
<keyword id="KW-0521">NADP</keyword>
<keyword id="KW-0547">Nucleotide-binding</keyword>
<keyword id="KW-1185">Reference proteome</keyword>
<keyword id="KW-0808">Transferase</keyword>